<feature type="signal peptide" evidence="1">
    <location>
        <begin position="1"/>
        <end position="26"/>
    </location>
</feature>
<feature type="chain" id="PRO_5000205037" description="Catalase-peroxidase 2">
    <location>
        <begin position="27"/>
        <end position="738"/>
    </location>
</feature>
<feature type="active site" description="Proton acceptor" evidence="1">
    <location>
        <position position="105"/>
    </location>
</feature>
<feature type="binding site" description="axial binding residue" evidence="1">
    <location>
        <position position="267"/>
    </location>
    <ligand>
        <name>heme b</name>
        <dbReference type="ChEBI" id="CHEBI:60344"/>
    </ligand>
    <ligandPart>
        <name>Fe</name>
        <dbReference type="ChEBI" id="CHEBI:18248"/>
    </ligandPart>
</feature>
<feature type="site" description="Transition state stabilizer" evidence="1">
    <location>
        <position position="101"/>
    </location>
</feature>
<feature type="cross-link" description="Tryptophyl-tyrosyl-methioninium (Trp-Tyr) (with M-252)" evidence="1">
    <location>
        <begin position="104"/>
        <end position="226"/>
    </location>
</feature>
<feature type="cross-link" description="Tryptophyl-tyrosyl-methioninium (Tyr-Met) (with W-104)" evidence="1">
    <location>
        <begin position="226"/>
        <end position="252"/>
    </location>
</feature>
<organism>
    <name type="scientific">Shewanella amazonensis (strain ATCC BAA-1098 / SB2B)</name>
    <dbReference type="NCBI Taxonomy" id="326297"/>
    <lineage>
        <taxon>Bacteria</taxon>
        <taxon>Pseudomonadati</taxon>
        <taxon>Pseudomonadota</taxon>
        <taxon>Gammaproteobacteria</taxon>
        <taxon>Alteromonadales</taxon>
        <taxon>Shewanellaceae</taxon>
        <taxon>Shewanella</taxon>
    </lineage>
</organism>
<sequence>MKRTLPTLSALALSMSLALAAGQTQAAETTTNSYWWPEQLDLSPLRQHGSESNPYGADYDYAKAFGSLDLVAVKADIKTVLTTSQDWWPADYGHYGPFFIRMAWHSAGVYRIFDGRGGASGGQQRFEPLNSWPDNVNLDKARRLLWPIKQKYGSKISWADLMVLAGNVSLESMGFKTFGFAGGRTDDWEAERVDWGHEKKWLDNKRHNEKGELAKPLGATQMGLIYVNPEGPNGVPDPLAAARDIRETFGRMAMNDEETVALIAGGHTFGKAHGAHDPAKCVGADPAAAGVEAQGLGWKNKCGKGHSEDTVTSGLEGAWSVSPTQWTMQYLDNLYGFEWVQSKSPAGHIQWIPANGAGDNLVPDAHVAGKRHAPIMFTTDIALKEDPSYREITSRFRKDPKAFELAFAKAWFKLTHRDMGPKTRYLGSDVPAEALIWQDPIPALDHAVIDTNDIAALKSAILASGIAVPELVRTAWASAASFRGTDMRGGANGARLRLEPQRSWEVNNPEELAKVLPKLEKIQKDFNKSLKGGKKVSLADVIVLAGGTAIEQAARSAGYSVTVPFTPGRMDATTAQTDVSSFAVLEPKADAFRNFFSEESYLPPAEALVEKATQLTLSVPEMTALVGGLRVLDANSNKAKHGVFTDKPGNLSNDFFVNLLDMSTRWEKSPREAGLYQGFDRQSGKLRWTATPVDLIFGSHAELRAVAEVYGANDGKDRFVEDFIAAWTKVMNLDRFDI</sequence>
<gene>
    <name evidence="1" type="primary">katG2</name>
    <name type="ordered locus">Sama_0745</name>
</gene>
<name>KATG2_SHEAM</name>
<protein>
    <recommendedName>
        <fullName evidence="1">Catalase-peroxidase 2</fullName>
        <shortName evidence="1">CP 2</shortName>
        <ecNumber evidence="1">1.11.1.21</ecNumber>
    </recommendedName>
    <alternativeName>
        <fullName evidence="1">Peroxidase/catalase 2</fullName>
    </alternativeName>
</protein>
<proteinExistence type="inferred from homology"/>
<reference key="1">
    <citation type="submission" date="2006-12" db="EMBL/GenBank/DDBJ databases">
        <title>Complete sequence of Shewanella amazonensis SB2B.</title>
        <authorList>
            <consortium name="US DOE Joint Genome Institute"/>
            <person name="Copeland A."/>
            <person name="Lucas S."/>
            <person name="Lapidus A."/>
            <person name="Barry K."/>
            <person name="Detter J.C."/>
            <person name="Glavina del Rio T."/>
            <person name="Hammon N."/>
            <person name="Israni S."/>
            <person name="Dalin E."/>
            <person name="Tice H."/>
            <person name="Pitluck S."/>
            <person name="Munk A.C."/>
            <person name="Brettin T."/>
            <person name="Bruce D."/>
            <person name="Han C."/>
            <person name="Tapia R."/>
            <person name="Gilna P."/>
            <person name="Schmutz J."/>
            <person name="Larimer F."/>
            <person name="Land M."/>
            <person name="Hauser L."/>
            <person name="Kyrpides N."/>
            <person name="Mikhailova N."/>
            <person name="Fredrickson J."/>
            <person name="Richardson P."/>
        </authorList>
    </citation>
    <scope>NUCLEOTIDE SEQUENCE [LARGE SCALE GENOMIC DNA]</scope>
    <source>
        <strain>ATCC BAA-1098 / SB2B</strain>
    </source>
</reference>
<accession>A1S3J7</accession>
<evidence type="ECO:0000255" key="1">
    <source>
        <dbReference type="HAMAP-Rule" id="MF_01961"/>
    </source>
</evidence>
<comment type="function">
    <text evidence="1">Bifunctional enzyme with both catalase and broad-spectrum peroxidase activity.</text>
</comment>
<comment type="catalytic activity">
    <reaction evidence="1">
        <text>H2O2 + AH2 = A + 2 H2O</text>
        <dbReference type="Rhea" id="RHEA:30275"/>
        <dbReference type="ChEBI" id="CHEBI:13193"/>
        <dbReference type="ChEBI" id="CHEBI:15377"/>
        <dbReference type="ChEBI" id="CHEBI:16240"/>
        <dbReference type="ChEBI" id="CHEBI:17499"/>
        <dbReference type="EC" id="1.11.1.21"/>
    </reaction>
</comment>
<comment type="catalytic activity">
    <reaction evidence="1">
        <text>2 H2O2 = O2 + 2 H2O</text>
        <dbReference type="Rhea" id="RHEA:20309"/>
        <dbReference type="ChEBI" id="CHEBI:15377"/>
        <dbReference type="ChEBI" id="CHEBI:15379"/>
        <dbReference type="ChEBI" id="CHEBI:16240"/>
        <dbReference type="EC" id="1.11.1.21"/>
    </reaction>
</comment>
<comment type="cofactor">
    <cofactor evidence="1">
        <name>heme b</name>
        <dbReference type="ChEBI" id="CHEBI:60344"/>
    </cofactor>
    <text evidence="1">Binds 1 heme b (iron(II)-protoporphyrin IX) group per dimer.</text>
</comment>
<comment type="subunit">
    <text evidence="1">Homodimer or homotetramer.</text>
</comment>
<comment type="PTM">
    <text evidence="1">Formation of the three residue Trp-Tyr-Met cross-link is important for the catalase, but not the peroxidase activity of the enzyme.</text>
</comment>
<comment type="similarity">
    <text evidence="1">Belongs to the peroxidase family. Peroxidase/catalase subfamily.</text>
</comment>
<dbReference type="EC" id="1.11.1.21" evidence="1"/>
<dbReference type="EMBL" id="CP000507">
    <property type="protein sequence ID" value="ABL98953.1"/>
    <property type="molecule type" value="Genomic_DNA"/>
</dbReference>
<dbReference type="RefSeq" id="WP_011758863.1">
    <property type="nucleotide sequence ID" value="NC_008700.1"/>
</dbReference>
<dbReference type="SMR" id="A1S3J7"/>
<dbReference type="STRING" id="326297.Sama_0745"/>
<dbReference type="PeroxiBase" id="3598">
    <property type="entry name" value="SamCP01_SB2B"/>
</dbReference>
<dbReference type="KEGG" id="saz:Sama_0745"/>
<dbReference type="eggNOG" id="COG0376">
    <property type="taxonomic scope" value="Bacteria"/>
</dbReference>
<dbReference type="HOGENOM" id="CLU_025424_2_0_6"/>
<dbReference type="OrthoDB" id="9759743at2"/>
<dbReference type="Proteomes" id="UP000009175">
    <property type="component" value="Chromosome"/>
</dbReference>
<dbReference type="GO" id="GO:0005829">
    <property type="term" value="C:cytosol"/>
    <property type="evidence" value="ECO:0007669"/>
    <property type="project" value="TreeGrafter"/>
</dbReference>
<dbReference type="GO" id="GO:0004096">
    <property type="term" value="F:catalase activity"/>
    <property type="evidence" value="ECO:0007669"/>
    <property type="project" value="UniProtKB-UniRule"/>
</dbReference>
<dbReference type="GO" id="GO:0020037">
    <property type="term" value="F:heme binding"/>
    <property type="evidence" value="ECO:0007669"/>
    <property type="project" value="InterPro"/>
</dbReference>
<dbReference type="GO" id="GO:0046872">
    <property type="term" value="F:metal ion binding"/>
    <property type="evidence" value="ECO:0007669"/>
    <property type="project" value="UniProtKB-KW"/>
</dbReference>
<dbReference type="GO" id="GO:0070301">
    <property type="term" value="P:cellular response to hydrogen peroxide"/>
    <property type="evidence" value="ECO:0007669"/>
    <property type="project" value="TreeGrafter"/>
</dbReference>
<dbReference type="GO" id="GO:0042744">
    <property type="term" value="P:hydrogen peroxide catabolic process"/>
    <property type="evidence" value="ECO:0007669"/>
    <property type="project" value="UniProtKB-KW"/>
</dbReference>
<dbReference type="CDD" id="cd00649">
    <property type="entry name" value="catalase_peroxidase_1"/>
    <property type="match status" value="1"/>
</dbReference>
<dbReference type="CDD" id="cd08200">
    <property type="entry name" value="catalase_peroxidase_2"/>
    <property type="match status" value="1"/>
</dbReference>
<dbReference type="FunFam" id="1.10.420.10:FF:000002">
    <property type="entry name" value="Catalase-peroxidase"/>
    <property type="match status" value="1"/>
</dbReference>
<dbReference type="FunFam" id="1.10.420.10:FF:000004">
    <property type="entry name" value="Catalase-peroxidase"/>
    <property type="match status" value="1"/>
</dbReference>
<dbReference type="FunFam" id="1.10.520.10:FF:000002">
    <property type="entry name" value="Catalase-peroxidase"/>
    <property type="match status" value="1"/>
</dbReference>
<dbReference type="Gene3D" id="1.10.520.10">
    <property type="match status" value="2"/>
</dbReference>
<dbReference type="Gene3D" id="1.10.420.10">
    <property type="entry name" value="Peroxidase, domain 2"/>
    <property type="match status" value="2"/>
</dbReference>
<dbReference type="HAMAP" id="MF_01961">
    <property type="entry name" value="Catal_peroxid"/>
    <property type="match status" value="1"/>
</dbReference>
<dbReference type="InterPro" id="IPR000763">
    <property type="entry name" value="Catalase_peroxidase"/>
</dbReference>
<dbReference type="InterPro" id="IPR002016">
    <property type="entry name" value="Haem_peroxidase"/>
</dbReference>
<dbReference type="InterPro" id="IPR010255">
    <property type="entry name" value="Haem_peroxidase_sf"/>
</dbReference>
<dbReference type="InterPro" id="IPR019794">
    <property type="entry name" value="Peroxidases_AS"/>
</dbReference>
<dbReference type="InterPro" id="IPR019793">
    <property type="entry name" value="Peroxidases_heam-ligand_BS"/>
</dbReference>
<dbReference type="NCBIfam" id="TIGR00198">
    <property type="entry name" value="cat_per_HPI"/>
    <property type="match status" value="1"/>
</dbReference>
<dbReference type="NCBIfam" id="NF011635">
    <property type="entry name" value="PRK15061.1"/>
    <property type="match status" value="1"/>
</dbReference>
<dbReference type="PANTHER" id="PTHR30555:SF0">
    <property type="entry name" value="CATALASE-PEROXIDASE"/>
    <property type="match status" value="1"/>
</dbReference>
<dbReference type="PANTHER" id="PTHR30555">
    <property type="entry name" value="HYDROPEROXIDASE I, BIFUNCTIONAL CATALASE-PEROXIDASE"/>
    <property type="match status" value="1"/>
</dbReference>
<dbReference type="Pfam" id="PF00141">
    <property type="entry name" value="peroxidase"/>
    <property type="match status" value="2"/>
</dbReference>
<dbReference type="PRINTS" id="PR00460">
    <property type="entry name" value="BPEROXIDASE"/>
</dbReference>
<dbReference type="PRINTS" id="PR00458">
    <property type="entry name" value="PEROXIDASE"/>
</dbReference>
<dbReference type="SUPFAM" id="SSF48113">
    <property type="entry name" value="Heme-dependent peroxidases"/>
    <property type="match status" value="2"/>
</dbReference>
<dbReference type="PROSITE" id="PS00435">
    <property type="entry name" value="PEROXIDASE_1"/>
    <property type="match status" value="1"/>
</dbReference>
<dbReference type="PROSITE" id="PS00436">
    <property type="entry name" value="PEROXIDASE_2"/>
    <property type="match status" value="1"/>
</dbReference>
<dbReference type="PROSITE" id="PS50873">
    <property type="entry name" value="PEROXIDASE_4"/>
    <property type="match status" value="1"/>
</dbReference>
<keyword id="KW-0349">Heme</keyword>
<keyword id="KW-0376">Hydrogen peroxide</keyword>
<keyword id="KW-0408">Iron</keyword>
<keyword id="KW-0479">Metal-binding</keyword>
<keyword id="KW-0560">Oxidoreductase</keyword>
<keyword id="KW-0575">Peroxidase</keyword>
<keyword id="KW-1185">Reference proteome</keyword>
<keyword id="KW-0732">Signal</keyword>